<proteinExistence type="inferred from homology"/>
<evidence type="ECO:0000255" key="1">
    <source>
        <dbReference type="HAMAP-Rule" id="MF_01037"/>
    </source>
</evidence>
<protein>
    <recommendedName>
        <fullName evidence="1">Methylenetetrahydrofolate--tRNA-(uracil-5-)-methyltransferase TrmFO</fullName>
        <ecNumber evidence="1">2.1.1.74</ecNumber>
    </recommendedName>
    <alternativeName>
        <fullName evidence="1">Folate-dependent tRNA (uracil-5-)-methyltransferase</fullName>
    </alternativeName>
    <alternativeName>
        <fullName evidence="1">Folate-dependent tRNA(M-5-U54)-methyltransferase</fullName>
    </alternativeName>
</protein>
<reference key="1">
    <citation type="journal article" date="2009" name="PLoS Pathog.">
        <title>Genomic evidence for the evolution of Streptococcus equi: host restriction, increased virulence, and genetic exchange with human pathogens.</title>
        <authorList>
            <person name="Holden M.T.G."/>
            <person name="Heather Z."/>
            <person name="Paillot R."/>
            <person name="Steward K.F."/>
            <person name="Webb K."/>
            <person name="Ainslie F."/>
            <person name="Jourdan T."/>
            <person name="Bason N.C."/>
            <person name="Holroyd N.E."/>
            <person name="Mungall K."/>
            <person name="Quail M.A."/>
            <person name="Sanders M."/>
            <person name="Simmonds M."/>
            <person name="Willey D."/>
            <person name="Brooks K."/>
            <person name="Aanensen D.M."/>
            <person name="Spratt B.G."/>
            <person name="Jolley K.A."/>
            <person name="Maiden M.C.J."/>
            <person name="Kehoe M."/>
            <person name="Chanter N."/>
            <person name="Bentley S.D."/>
            <person name="Robinson C."/>
            <person name="Maskell D.J."/>
            <person name="Parkhill J."/>
            <person name="Waller A.S."/>
        </authorList>
    </citation>
    <scope>NUCLEOTIDE SEQUENCE [LARGE SCALE GENOMIC DNA]</scope>
    <source>
        <strain>4047</strain>
    </source>
</reference>
<keyword id="KW-0963">Cytoplasm</keyword>
<keyword id="KW-0274">FAD</keyword>
<keyword id="KW-0285">Flavoprotein</keyword>
<keyword id="KW-0489">Methyltransferase</keyword>
<keyword id="KW-0520">NAD</keyword>
<keyword id="KW-0521">NADP</keyword>
<keyword id="KW-0808">Transferase</keyword>
<keyword id="KW-0819">tRNA processing</keyword>
<sequence>MSQSYINVIGAGLAGSEAAYQIAKRGIPVKLYEMRGVKATPQHKTTHFAELVCSNSFRGDSLTNAVGLLKEELRRLDSIIMRAGEAHRVPAGGAMAVDREGYAKAVTAELENHPLIEIIREEVIDIPSDAITVIATGPLTSDSLAEKIHALNGGAGFYFYDAAAPIVDKSTINMDRVYLKSRYDKGEAAYLNCPMTKEEFMAFHEALTTAEEAPLNAFEKEKYFEGCMPIEVMAKRGIKTMLYGPMKPVGLEYPDDYKGPRDGDFKTPYAVVQLRQDNAAGSLYNIVGFQTHLKWGEQKRVFQMIPGLEHAEFVRYGVMHRNSYMDSPKLLTQGFQSRANHRLFFAGQMTGVEGYVESAASGLVAGINAARLFKEEEPLVFPNTTAIGSLPYYITHADSKHFQPMNVNFGIIKELDGPRIRDKKERYEAIAKRALADLAAYLTV</sequence>
<feature type="chain" id="PRO_1000149476" description="Methylenetetrahydrofolate--tRNA-(uracil-5-)-methyltransferase TrmFO">
    <location>
        <begin position="1"/>
        <end position="444"/>
    </location>
</feature>
<feature type="binding site" evidence="1">
    <location>
        <begin position="10"/>
        <end position="15"/>
    </location>
    <ligand>
        <name>FAD</name>
        <dbReference type="ChEBI" id="CHEBI:57692"/>
    </ligand>
</feature>
<comment type="function">
    <text evidence="1">Catalyzes the folate-dependent formation of 5-methyl-uridine at position 54 (M-5-U54) in all tRNAs.</text>
</comment>
<comment type="catalytic activity">
    <reaction evidence="1">
        <text>uridine(54) in tRNA + (6R)-5,10-methylene-5,6,7,8-tetrahydrofolate + NADH + H(+) = 5-methyluridine(54) in tRNA + (6S)-5,6,7,8-tetrahydrofolate + NAD(+)</text>
        <dbReference type="Rhea" id="RHEA:16873"/>
        <dbReference type="Rhea" id="RHEA-COMP:10167"/>
        <dbReference type="Rhea" id="RHEA-COMP:10193"/>
        <dbReference type="ChEBI" id="CHEBI:15378"/>
        <dbReference type="ChEBI" id="CHEBI:15636"/>
        <dbReference type="ChEBI" id="CHEBI:57453"/>
        <dbReference type="ChEBI" id="CHEBI:57540"/>
        <dbReference type="ChEBI" id="CHEBI:57945"/>
        <dbReference type="ChEBI" id="CHEBI:65315"/>
        <dbReference type="ChEBI" id="CHEBI:74447"/>
        <dbReference type="EC" id="2.1.1.74"/>
    </reaction>
</comment>
<comment type="catalytic activity">
    <reaction evidence="1">
        <text>uridine(54) in tRNA + (6R)-5,10-methylene-5,6,7,8-tetrahydrofolate + NADPH + H(+) = 5-methyluridine(54) in tRNA + (6S)-5,6,7,8-tetrahydrofolate + NADP(+)</text>
        <dbReference type="Rhea" id="RHEA:62372"/>
        <dbReference type="Rhea" id="RHEA-COMP:10167"/>
        <dbReference type="Rhea" id="RHEA-COMP:10193"/>
        <dbReference type="ChEBI" id="CHEBI:15378"/>
        <dbReference type="ChEBI" id="CHEBI:15636"/>
        <dbReference type="ChEBI" id="CHEBI:57453"/>
        <dbReference type="ChEBI" id="CHEBI:57783"/>
        <dbReference type="ChEBI" id="CHEBI:58349"/>
        <dbReference type="ChEBI" id="CHEBI:65315"/>
        <dbReference type="ChEBI" id="CHEBI:74447"/>
        <dbReference type="EC" id="2.1.1.74"/>
    </reaction>
</comment>
<comment type="cofactor">
    <cofactor evidence="1">
        <name>FAD</name>
        <dbReference type="ChEBI" id="CHEBI:57692"/>
    </cofactor>
</comment>
<comment type="subcellular location">
    <subcellularLocation>
        <location evidence="1">Cytoplasm</location>
    </subcellularLocation>
</comment>
<comment type="similarity">
    <text evidence="1">Belongs to the MnmG family. TrmFO subfamily.</text>
</comment>
<gene>
    <name evidence="1" type="primary">trmFO</name>
    <name type="ordered locus">SEQ_1216</name>
</gene>
<name>TRMFO_STRE4</name>
<dbReference type="EC" id="2.1.1.74" evidence="1"/>
<dbReference type="EMBL" id="FM204883">
    <property type="protein sequence ID" value="CAW93937.1"/>
    <property type="molecule type" value="Genomic_DNA"/>
</dbReference>
<dbReference type="RefSeq" id="WP_012679589.1">
    <property type="nucleotide sequence ID" value="NC_012471.1"/>
</dbReference>
<dbReference type="SMR" id="C0M6C7"/>
<dbReference type="KEGG" id="seu:SEQ_1216"/>
<dbReference type="HOGENOM" id="CLU_033057_1_0_9"/>
<dbReference type="OrthoDB" id="9803114at2"/>
<dbReference type="Proteomes" id="UP000001365">
    <property type="component" value="Chromosome"/>
</dbReference>
<dbReference type="GO" id="GO:0005829">
    <property type="term" value="C:cytosol"/>
    <property type="evidence" value="ECO:0007669"/>
    <property type="project" value="TreeGrafter"/>
</dbReference>
<dbReference type="GO" id="GO:0050660">
    <property type="term" value="F:flavin adenine dinucleotide binding"/>
    <property type="evidence" value="ECO:0007669"/>
    <property type="project" value="UniProtKB-UniRule"/>
</dbReference>
<dbReference type="GO" id="GO:0047151">
    <property type="term" value="F:tRNA (uracil(54)-C5)-methyltransferase activity, 5,10-methylenetetrahydrofolate-dependent"/>
    <property type="evidence" value="ECO:0007669"/>
    <property type="project" value="UniProtKB-UniRule"/>
</dbReference>
<dbReference type="GO" id="GO:0030488">
    <property type="term" value="P:tRNA methylation"/>
    <property type="evidence" value="ECO:0007669"/>
    <property type="project" value="TreeGrafter"/>
</dbReference>
<dbReference type="GO" id="GO:0002098">
    <property type="term" value="P:tRNA wobble uridine modification"/>
    <property type="evidence" value="ECO:0007669"/>
    <property type="project" value="TreeGrafter"/>
</dbReference>
<dbReference type="FunFam" id="3.50.50.60:FF:000035">
    <property type="entry name" value="Methylenetetrahydrofolate--tRNA-(uracil-5-)-methyltransferase TrmFO"/>
    <property type="match status" value="1"/>
</dbReference>
<dbReference type="FunFam" id="3.50.50.60:FF:000040">
    <property type="entry name" value="Methylenetetrahydrofolate--tRNA-(uracil-5-)-methyltransferase TrmFO"/>
    <property type="match status" value="1"/>
</dbReference>
<dbReference type="Gene3D" id="3.50.50.60">
    <property type="entry name" value="FAD/NAD(P)-binding domain"/>
    <property type="match status" value="2"/>
</dbReference>
<dbReference type="HAMAP" id="MF_01037">
    <property type="entry name" value="TrmFO"/>
    <property type="match status" value="1"/>
</dbReference>
<dbReference type="InterPro" id="IPR036188">
    <property type="entry name" value="FAD/NAD-bd_sf"/>
</dbReference>
<dbReference type="InterPro" id="IPR002218">
    <property type="entry name" value="MnmG-rel"/>
</dbReference>
<dbReference type="InterPro" id="IPR020595">
    <property type="entry name" value="MnmG-rel_CS"/>
</dbReference>
<dbReference type="InterPro" id="IPR040131">
    <property type="entry name" value="MnmG_N"/>
</dbReference>
<dbReference type="InterPro" id="IPR004417">
    <property type="entry name" value="TrmFO"/>
</dbReference>
<dbReference type="NCBIfam" id="TIGR00137">
    <property type="entry name" value="gid_trmFO"/>
    <property type="match status" value="1"/>
</dbReference>
<dbReference type="NCBIfam" id="NF003739">
    <property type="entry name" value="PRK05335.1"/>
    <property type="match status" value="1"/>
</dbReference>
<dbReference type="PANTHER" id="PTHR11806">
    <property type="entry name" value="GLUCOSE INHIBITED DIVISION PROTEIN A"/>
    <property type="match status" value="1"/>
</dbReference>
<dbReference type="PANTHER" id="PTHR11806:SF2">
    <property type="entry name" value="METHYLENETETRAHYDROFOLATE--TRNA-(URACIL-5-)-METHYLTRANSFERASE TRMFO"/>
    <property type="match status" value="1"/>
</dbReference>
<dbReference type="Pfam" id="PF01134">
    <property type="entry name" value="GIDA"/>
    <property type="match status" value="1"/>
</dbReference>
<dbReference type="SUPFAM" id="SSF51905">
    <property type="entry name" value="FAD/NAD(P)-binding domain"/>
    <property type="match status" value="1"/>
</dbReference>
<dbReference type="PROSITE" id="PS01281">
    <property type="entry name" value="GIDA_2"/>
    <property type="match status" value="1"/>
</dbReference>
<accession>C0M6C7</accession>
<organism>
    <name type="scientific">Streptococcus equi subsp. equi (strain 4047)</name>
    <dbReference type="NCBI Taxonomy" id="553482"/>
    <lineage>
        <taxon>Bacteria</taxon>
        <taxon>Bacillati</taxon>
        <taxon>Bacillota</taxon>
        <taxon>Bacilli</taxon>
        <taxon>Lactobacillales</taxon>
        <taxon>Streptococcaceae</taxon>
        <taxon>Streptococcus</taxon>
    </lineage>
</organism>